<accession>Q9N1E3</accession>
<name>CD22_PONPY</name>
<proteinExistence type="evidence at transcript level"/>
<reference key="1">
    <citation type="journal article" date="2000" name="J. Biol. Chem.">
        <title>Loss of N-glycolylneuraminic acid in human evolution: implications for sialic acid recognition by siglecs.</title>
        <authorList>
            <person name="Brinkman-Van der Linden E.C.M."/>
            <person name="Sjoberg E.R."/>
            <person name="Juneja L.R."/>
            <person name="Crocker P.R."/>
            <person name="Varki N."/>
            <person name="Varki A."/>
        </authorList>
    </citation>
    <scope>NUCLEOTIDE SEQUENCE [MRNA]</scope>
</reference>
<sequence>MHLLGPWLLLLEYLAFSDSSKWAFEHPETLYAWEGACVWIPCTYRALDGALESFILFHNPEYNKNTSKFDGTRLYESTKDGEVPSEQKRVQFLGDKSKNCTLSIHPVHVNDSGQLGLRMESKTEKWMERIHLNVSERPFPPHIQLPPEIQESQEVTLTCLLNFSCYGYPIQLQWFLEGVPVGQAAVNSTSLATKSVFTRSELKFSPQWSHHGKIVTCQLHGADGKFLSNDTVQLNVKHTPKLKIEVNPSDAIVREGDSVTMTCEVSSSNPKYTTVSWLKDGTPLKKQNALMLTLQEVTKDQSGKYCCQVSNDVGPGRSEEVFLQVQYAPE</sequence>
<gene>
    <name evidence="2" type="primary">CD22</name>
    <name type="synonym">SIGLEC2</name>
</gene>
<organism>
    <name type="scientific">Pongo pygmaeus</name>
    <name type="common">Bornean orangutan</name>
    <dbReference type="NCBI Taxonomy" id="9600"/>
    <lineage>
        <taxon>Eukaryota</taxon>
        <taxon>Metazoa</taxon>
        <taxon>Chordata</taxon>
        <taxon>Craniata</taxon>
        <taxon>Vertebrata</taxon>
        <taxon>Euteleostomi</taxon>
        <taxon>Mammalia</taxon>
        <taxon>Eutheria</taxon>
        <taxon>Euarchontoglires</taxon>
        <taxon>Primates</taxon>
        <taxon>Haplorrhini</taxon>
        <taxon>Catarrhini</taxon>
        <taxon>Hominidae</taxon>
        <taxon>Pongo</taxon>
    </lineage>
</organism>
<protein>
    <recommendedName>
        <fullName evidence="2">B-cell receptor CD22</fullName>
    </recommendedName>
    <alternativeName>
        <fullName>Sialic acid-binding Ig-like lectin 2</fullName>
        <shortName>Siglec-2</shortName>
    </alternativeName>
    <cdAntigenName>CD22</cdAntigenName>
</protein>
<comment type="function">
    <text evidence="2">Most highly expressed siglec (sialic acid-binding immunoglobulin-like lectin) on B-cells that plays a role in various aspects of B-cell biology including differentiation, antigen presentation, and trafficking to bone marrow. Binds to alpha 2,6-linked sialic acid residues of surface molecules such as CD22 itself, CD45 and IgM in a cis configuration. Can also bind to ligands on other cells as an adhesion molecule in a trans configuration. Acts as an inhibitory coreceptor on the surface of B-cells and inhibits B-cell receptor induced signaling, characterized by inhibition of the calcium mobilization and cellular activation. Mechanistically, the immunoreceptor tyrosine-based inhibitory motif domain is phosphorylated by the Src kinase LYN, which in turn leads to the recruitment of the protein tyrosine phosphatase 1/PTPN6, leading to the negative regulation of BCR signaling. If this negative signaling from is of sufficient strength, apoptosis of the B-cell can be induced.</text>
</comment>
<comment type="subunit">
    <text evidence="2 3">Predominantly monomer of isoform CD22-beta. Also found as heterodimer of isoform CD22-beta and a shorter isoform. Interacts with PTPN6/SHP-1, LYN, SYK, PIK3R1/PIK3R2 and PLCG1 upon phosphorylation. Interacts with GRB2, INPP5D and SHC1 upon phosphorylation (By similarity). May form a complex with INPP5D/SHIP, GRB2 and SHC1 (By similarity).</text>
</comment>
<comment type="subcellular location">
    <subcellularLocation>
        <location evidence="2">Cell membrane</location>
        <topology evidence="2">Single-pass type I membrane protein</topology>
    </subcellularLocation>
</comment>
<comment type="similarity">
    <text evidence="6">Belongs to the immunoglobulin superfamily. SIGLEC (sialic acid binding Ig-like lectin) family.</text>
</comment>
<dbReference type="EMBL" id="AF199418">
    <property type="protein sequence ID" value="AAF44617.1"/>
    <property type="molecule type" value="mRNA"/>
</dbReference>
<dbReference type="SMR" id="Q9N1E3"/>
<dbReference type="GlyCosmos" id="Q9N1E3">
    <property type="glycosylation" value="7 sites, No reported glycans"/>
</dbReference>
<dbReference type="OrthoDB" id="8825892at2759"/>
<dbReference type="GO" id="GO:0005769">
    <property type="term" value="C:early endosome"/>
    <property type="evidence" value="ECO:0007669"/>
    <property type="project" value="TreeGrafter"/>
</dbReference>
<dbReference type="GO" id="GO:0009897">
    <property type="term" value="C:external side of plasma membrane"/>
    <property type="evidence" value="ECO:0007669"/>
    <property type="project" value="TreeGrafter"/>
</dbReference>
<dbReference type="GO" id="GO:0070062">
    <property type="term" value="C:extracellular exosome"/>
    <property type="evidence" value="ECO:0007669"/>
    <property type="project" value="TreeGrafter"/>
</dbReference>
<dbReference type="GO" id="GO:0055037">
    <property type="term" value="C:recycling endosome"/>
    <property type="evidence" value="ECO:0007669"/>
    <property type="project" value="TreeGrafter"/>
</dbReference>
<dbReference type="GO" id="GO:0030246">
    <property type="term" value="F:carbohydrate binding"/>
    <property type="evidence" value="ECO:0007669"/>
    <property type="project" value="UniProtKB-KW"/>
</dbReference>
<dbReference type="GO" id="GO:0042609">
    <property type="term" value="F:CD4 receptor binding"/>
    <property type="evidence" value="ECO:0007669"/>
    <property type="project" value="TreeGrafter"/>
</dbReference>
<dbReference type="GO" id="GO:0019903">
    <property type="term" value="F:protein phosphatase binding"/>
    <property type="evidence" value="ECO:0007669"/>
    <property type="project" value="TreeGrafter"/>
</dbReference>
<dbReference type="GO" id="GO:0033691">
    <property type="term" value="F:sialic acid binding"/>
    <property type="evidence" value="ECO:0007669"/>
    <property type="project" value="TreeGrafter"/>
</dbReference>
<dbReference type="GO" id="GO:0042113">
    <property type="term" value="P:B cell activation"/>
    <property type="evidence" value="ECO:0007669"/>
    <property type="project" value="TreeGrafter"/>
</dbReference>
<dbReference type="GO" id="GO:0007155">
    <property type="term" value="P:cell adhesion"/>
    <property type="evidence" value="ECO:0007669"/>
    <property type="project" value="UniProtKB-KW"/>
</dbReference>
<dbReference type="GO" id="GO:0050859">
    <property type="term" value="P:negative regulation of B cell receptor signaling pathway"/>
    <property type="evidence" value="ECO:0007669"/>
    <property type="project" value="TreeGrafter"/>
</dbReference>
<dbReference type="GO" id="GO:0030888">
    <property type="term" value="P:regulation of B cell proliferation"/>
    <property type="evidence" value="ECO:0007669"/>
    <property type="project" value="TreeGrafter"/>
</dbReference>
<dbReference type="CDD" id="cd20938">
    <property type="entry name" value="IgC1_CD22_d2"/>
    <property type="match status" value="1"/>
</dbReference>
<dbReference type="FunFam" id="2.60.40.10:FF:001605">
    <property type="entry name" value="B-cell receptor CD22"/>
    <property type="match status" value="1"/>
</dbReference>
<dbReference type="FunFam" id="2.60.40.10:FF:002030">
    <property type="entry name" value="B-cell receptor CD22"/>
    <property type="match status" value="1"/>
</dbReference>
<dbReference type="FunFam" id="2.60.40.10:FF:002336">
    <property type="entry name" value="B-cell receptor CD22"/>
    <property type="match status" value="1"/>
</dbReference>
<dbReference type="Gene3D" id="2.60.40.10">
    <property type="entry name" value="Immunoglobulins"/>
    <property type="match status" value="3"/>
</dbReference>
<dbReference type="InterPro" id="IPR013162">
    <property type="entry name" value="CD80_C2-set"/>
</dbReference>
<dbReference type="InterPro" id="IPR007110">
    <property type="entry name" value="Ig-like_dom"/>
</dbReference>
<dbReference type="InterPro" id="IPR036179">
    <property type="entry name" value="Ig-like_dom_sf"/>
</dbReference>
<dbReference type="InterPro" id="IPR013783">
    <property type="entry name" value="Ig-like_fold"/>
</dbReference>
<dbReference type="InterPro" id="IPR056386">
    <property type="entry name" value="Ig_CD22"/>
</dbReference>
<dbReference type="InterPro" id="IPR003599">
    <property type="entry name" value="Ig_sub"/>
</dbReference>
<dbReference type="InterPro" id="IPR003598">
    <property type="entry name" value="Ig_sub2"/>
</dbReference>
<dbReference type="PANTHER" id="PTHR46958">
    <property type="entry name" value="B-CELL RECEPTOR CD22"/>
    <property type="match status" value="1"/>
</dbReference>
<dbReference type="PANTHER" id="PTHR46958:SF1">
    <property type="entry name" value="B-CELL RECEPTOR CD22"/>
    <property type="match status" value="1"/>
</dbReference>
<dbReference type="Pfam" id="PF08205">
    <property type="entry name" value="C2-set_2"/>
    <property type="match status" value="1"/>
</dbReference>
<dbReference type="Pfam" id="PF13895">
    <property type="entry name" value="Ig_2"/>
    <property type="match status" value="1"/>
</dbReference>
<dbReference type="Pfam" id="PF24518">
    <property type="entry name" value="Ig_CD22"/>
    <property type="match status" value="1"/>
</dbReference>
<dbReference type="SMART" id="SM00409">
    <property type="entry name" value="IG"/>
    <property type="match status" value="3"/>
</dbReference>
<dbReference type="SMART" id="SM00408">
    <property type="entry name" value="IGc2"/>
    <property type="match status" value="1"/>
</dbReference>
<dbReference type="SUPFAM" id="SSF48726">
    <property type="entry name" value="Immunoglobulin"/>
    <property type="match status" value="3"/>
</dbReference>
<dbReference type="PROSITE" id="PS50835">
    <property type="entry name" value="IG_LIKE"/>
    <property type="match status" value="2"/>
</dbReference>
<feature type="signal peptide" evidence="4">
    <location>
        <begin position="1"/>
        <end position="17"/>
    </location>
</feature>
<feature type="chain" id="PRO_0000014877" description="B-cell receptor CD22">
    <location>
        <begin position="18"/>
        <end position="330"/>
    </location>
</feature>
<feature type="topological domain" description="Extracellular" evidence="4">
    <location>
        <begin position="18"/>
        <end position="330" status="greater than"/>
    </location>
</feature>
<feature type="domain" description="Ig-like V-type">
    <location>
        <begin position="18"/>
        <end position="136"/>
    </location>
</feature>
<feature type="domain" description="Ig-like C2-type 1">
    <location>
        <begin position="141"/>
        <end position="233"/>
    </location>
</feature>
<feature type="domain" description="Ig-like C2-type 2">
    <location>
        <begin position="240"/>
        <end position="324"/>
    </location>
</feature>
<feature type="binding site" evidence="1">
    <location>
        <position position="118"/>
    </location>
    <ligand>
        <name>N-acetylneuraminate</name>
        <dbReference type="ChEBI" id="CHEBI:35418"/>
    </ligand>
</feature>
<feature type="glycosylation site" description="N-linked (GlcNAc...) asparagine" evidence="4">
    <location>
        <position position="65"/>
    </location>
</feature>
<feature type="glycosylation site" description="N-linked (GlcNAc...) asparagine" evidence="4">
    <location>
        <position position="99"/>
    </location>
</feature>
<feature type="glycosylation site" description="N-linked (GlcNAc...) asparagine" evidence="4">
    <location>
        <position position="110"/>
    </location>
</feature>
<feature type="glycosylation site" description="N-linked (GlcNAc...) asparagine" evidence="4">
    <location>
        <position position="133"/>
    </location>
</feature>
<feature type="glycosylation site" description="N-linked (GlcNAc...) asparagine" evidence="4">
    <location>
        <position position="162"/>
    </location>
</feature>
<feature type="glycosylation site" description="N-linked (GlcNAc...) asparagine" evidence="4">
    <location>
        <position position="187"/>
    </location>
</feature>
<feature type="glycosylation site" description="N-linked (GlcNAc...) asparagine" evidence="4">
    <location>
        <position position="229"/>
    </location>
</feature>
<feature type="disulfide bond" evidence="5">
    <location>
        <begin position="37"/>
        <end position="165"/>
    </location>
</feature>
<feature type="disulfide bond" evidence="5">
    <location>
        <begin position="42"/>
        <end position="100"/>
    </location>
</feature>
<feature type="disulfide bond" evidence="5">
    <location>
        <begin position="159"/>
        <end position="217"/>
    </location>
</feature>
<feature type="disulfide bond" evidence="5">
    <location>
        <begin position="263"/>
        <end position="307"/>
    </location>
</feature>
<feature type="non-terminal residue">
    <location>
        <position position="330"/>
    </location>
</feature>
<keyword id="KW-0130">Cell adhesion</keyword>
<keyword id="KW-1003">Cell membrane</keyword>
<keyword id="KW-1015">Disulfide bond</keyword>
<keyword id="KW-0325">Glycoprotein</keyword>
<keyword id="KW-0393">Immunoglobulin domain</keyword>
<keyword id="KW-1017">Isopeptide bond</keyword>
<keyword id="KW-0430">Lectin</keyword>
<keyword id="KW-0472">Membrane</keyword>
<keyword id="KW-0677">Repeat</keyword>
<keyword id="KW-0732">Signal</keyword>
<evidence type="ECO:0000250" key="1"/>
<evidence type="ECO:0000250" key="2">
    <source>
        <dbReference type="UniProtKB" id="P20273"/>
    </source>
</evidence>
<evidence type="ECO:0000250" key="3">
    <source>
        <dbReference type="UniProtKB" id="P35329"/>
    </source>
</evidence>
<evidence type="ECO:0000255" key="4"/>
<evidence type="ECO:0000255" key="5">
    <source>
        <dbReference type="PROSITE-ProRule" id="PRU00114"/>
    </source>
</evidence>
<evidence type="ECO:0000305" key="6"/>